<evidence type="ECO:0000250" key="1"/>
<evidence type="ECO:0000250" key="2">
    <source>
        <dbReference type="UniProtKB" id="O35678"/>
    </source>
</evidence>
<evidence type="ECO:0000269" key="3">
    <source>
    </source>
</evidence>
<evidence type="ECO:0000269" key="4">
    <source>
    </source>
</evidence>
<evidence type="ECO:0000269" key="5">
    <source>
    </source>
</evidence>
<evidence type="ECO:0000269" key="6">
    <source>
    </source>
</evidence>
<evidence type="ECO:0000269" key="7">
    <source>
    </source>
</evidence>
<evidence type="ECO:0000269" key="8">
    <source>
    </source>
</evidence>
<evidence type="ECO:0000269" key="9">
    <source>
    </source>
</evidence>
<evidence type="ECO:0000269" key="10">
    <source>
    </source>
</evidence>
<evidence type="ECO:0000303" key="11">
    <source>
    </source>
</evidence>
<evidence type="ECO:0000303" key="12">
    <source>
    </source>
</evidence>
<evidence type="ECO:0000303" key="13">
    <source>
    </source>
</evidence>
<evidence type="ECO:0000303" key="14">
    <source>
    </source>
</evidence>
<evidence type="ECO:0000305" key="15"/>
<evidence type="ECO:0000305" key="16">
    <source>
    </source>
</evidence>
<evidence type="ECO:0000312" key="17">
    <source>
        <dbReference type="HGNC" id="HGNC:17038"/>
    </source>
</evidence>
<evidence type="ECO:0007829" key="18">
    <source>
        <dbReference type="PDB" id="4UUQ"/>
    </source>
</evidence>
<evidence type="ECO:0007829" key="19">
    <source>
        <dbReference type="PDB" id="7L4T"/>
    </source>
</evidence>
<evidence type="ECO:0007829" key="20">
    <source>
        <dbReference type="PDB" id="7ZPG"/>
    </source>
</evidence>
<proteinExistence type="evidence at protein level"/>
<keyword id="KW-0002">3D-structure</keyword>
<keyword id="KW-0025">Alternative splicing</keyword>
<keyword id="KW-0963">Cytoplasm</keyword>
<keyword id="KW-0275">Fatty acid biosynthesis</keyword>
<keyword id="KW-0276">Fatty acid metabolism</keyword>
<keyword id="KW-0378">Hydrolase</keyword>
<keyword id="KW-0444">Lipid biosynthesis</keyword>
<keyword id="KW-0442">Lipid degradation</keyword>
<keyword id="KW-0443">Lipid metabolism</keyword>
<keyword id="KW-0472">Membrane</keyword>
<keyword id="KW-0944">Nitration</keyword>
<keyword id="KW-0597">Phosphoprotein</keyword>
<keyword id="KW-1267">Proteomics identification</keyword>
<keyword id="KW-1185">Reference proteome</keyword>
<keyword id="KW-0719">Serine esterase</keyword>
<dbReference type="EC" id="3.1.1.23" evidence="4 7 8 9 10"/>
<dbReference type="EMBL" id="U67963">
    <property type="protein sequence ID" value="AAB39616.1"/>
    <property type="status" value="ALT_INIT"/>
    <property type="molecule type" value="mRNA"/>
</dbReference>
<dbReference type="EMBL" id="AJ270950">
    <property type="protein sequence ID" value="CAC43316.1"/>
    <property type="molecule type" value="mRNA"/>
</dbReference>
<dbReference type="EMBL" id="AK091314">
    <property type="protein sequence ID" value="BAG52334.1"/>
    <property type="molecule type" value="mRNA"/>
</dbReference>
<dbReference type="EMBL" id="AK315529">
    <property type="protein sequence ID" value="BAG37910.1"/>
    <property type="status" value="ALT_INIT"/>
    <property type="molecule type" value="mRNA"/>
</dbReference>
<dbReference type="EMBL" id="AK304844">
    <property type="protein sequence ID" value="BAH14267.1"/>
    <property type="molecule type" value="mRNA"/>
</dbReference>
<dbReference type="EMBL" id="CR456835">
    <property type="protein sequence ID" value="CAG33116.1"/>
    <property type="status" value="ALT_INIT"/>
    <property type="molecule type" value="mRNA"/>
</dbReference>
<dbReference type="EMBL" id="AC023593">
    <property type="status" value="NOT_ANNOTATED_CDS"/>
    <property type="molecule type" value="Genomic_DNA"/>
</dbReference>
<dbReference type="EMBL" id="AC117480">
    <property type="status" value="NOT_ANNOTATED_CDS"/>
    <property type="molecule type" value="Genomic_DNA"/>
</dbReference>
<dbReference type="EMBL" id="CH471052">
    <property type="protein sequence ID" value="EAW79330.1"/>
    <property type="status" value="ALT_INIT"/>
    <property type="molecule type" value="Genomic_DNA"/>
</dbReference>
<dbReference type="EMBL" id="CH471052">
    <property type="protein sequence ID" value="EAW79331.1"/>
    <property type="status" value="ALT_INIT"/>
    <property type="molecule type" value="Genomic_DNA"/>
</dbReference>
<dbReference type="EMBL" id="BC000551">
    <property type="protein sequence ID" value="AAH00551.1"/>
    <property type="status" value="ALT_INIT"/>
    <property type="molecule type" value="mRNA"/>
</dbReference>
<dbReference type="EMBL" id="BC006230">
    <property type="protein sequence ID" value="AAH06230.1"/>
    <property type="status" value="ALT_INIT"/>
    <property type="molecule type" value="mRNA"/>
</dbReference>
<dbReference type="EMBL" id="BX640777">
    <property type="protein sequence ID" value="CAE45873.1"/>
    <property type="molecule type" value="mRNA"/>
</dbReference>
<dbReference type="CCDS" id="CCDS43148.1">
    <molecule id="Q99685-1"/>
</dbReference>
<dbReference type="CCDS" id="CCDS58852.1">
    <molecule id="Q99685-2"/>
</dbReference>
<dbReference type="RefSeq" id="NP_001003794.1">
    <molecule id="Q99685-1"/>
    <property type="nucleotide sequence ID" value="NM_001003794.3"/>
</dbReference>
<dbReference type="RefSeq" id="NP_001243514.1">
    <molecule id="Q99685-2"/>
    <property type="nucleotide sequence ID" value="NM_001256585.2"/>
</dbReference>
<dbReference type="RefSeq" id="NP_009214.1">
    <property type="nucleotide sequence ID" value="NM_007283.6"/>
</dbReference>
<dbReference type="PDB" id="3HJU">
    <property type="method" value="X-ray"/>
    <property type="resolution" value="2.20 A"/>
    <property type="chains" value="A/B=2-303"/>
</dbReference>
<dbReference type="PDB" id="3JW8">
    <property type="method" value="X-ray"/>
    <property type="resolution" value="2.10 A"/>
    <property type="chains" value="A/B=1-303"/>
</dbReference>
<dbReference type="PDB" id="3JWE">
    <property type="method" value="X-ray"/>
    <property type="resolution" value="2.70 A"/>
    <property type="chains" value="A/B=1-303"/>
</dbReference>
<dbReference type="PDB" id="3PE6">
    <property type="method" value="X-ray"/>
    <property type="resolution" value="1.35 A"/>
    <property type="chains" value="A=1-303"/>
</dbReference>
<dbReference type="PDB" id="4UUQ">
    <property type="method" value="X-ray"/>
    <property type="resolution" value="2.36 A"/>
    <property type="chains" value="A/B=1-303"/>
</dbReference>
<dbReference type="PDB" id="5ZUN">
    <property type="method" value="X-ray"/>
    <property type="resolution" value="1.35 A"/>
    <property type="chains" value="A=1-303"/>
</dbReference>
<dbReference type="PDB" id="6AX1">
    <property type="method" value="X-ray"/>
    <property type="resolution" value="2.26 A"/>
    <property type="chains" value="A/B=1-303"/>
</dbReference>
<dbReference type="PDB" id="6BQ0">
    <property type="method" value="X-ray"/>
    <property type="resolution" value="2.00 A"/>
    <property type="chains" value="A/B=1-303"/>
</dbReference>
<dbReference type="PDB" id="7L4T">
    <property type="method" value="X-ray"/>
    <property type="resolution" value="2.20 A"/>
    <property type="chains" value="A/B=1-303"/>
</dbReference>
<dbReference type="PDB" id="7L4U">
    <property type="method" value="X-ray"/>
    <property type="resolution" value="2.25 A"/>
    <property type="chains" value="A/B=1-303"/>
</dbReference>
<dbReference type="PDB" id="7L4W">
    <property type="method" value="X-ray"/>
    <property type="resolution" value="2.20 A"/>
    <property type="chains" value="A/B=1-303"/>
</dbReference>
<dbReference type="PDB" id="7L50">
    <property type="method" value="X-ray"/>
    <property type="resolution" value="2.30 A"/>
    <property type="chains" value="A/B/C/D=1-303"/>
</dbReference>
<dbReference type="PDB" id="7PRM">
    <property type="method" value="X-ray"/>
    <property type="resolution" value="1.65 A"/>
    <property type="chains" value="A=1-303"/>
</dbReference>
<dbReference type="PDB" id="7ZPG">
    <property type="method" value="X-ray"/>
    <property type="resolution" value="1.16 A"/>
    <property type="chains" value="A=1-303"/>
</dbReference>
<dbReference type="PDB" id="8AQF">
    <property type="method" value="X-ray"/>
    <property type="resolution" value="1.55 A"/>
    <property type="chains" value="A=1-303"/>
</dbReference>
<dbReference type="PDB" id="8PTC">
    <property type="method" value="X-ray"/>
    <property type="resolution" value="1.51 A"/>
    <property type="chains" value="A=1-303"/>
</dbReference>
<dbReference type="PDB" id="8PTQ">
    <property type="method" value="X-ray"/>
    <property type="resolution" value="1.55 A"/>
    <property type="chains" value="A=1-303"/>
</dbReference>
<dbReference type="PDB" id="8PTR">
    <property type="method" value="X-ray"/>
    <property type="resolution" value="1.73 A"/>
    <property type="chains" value="A=1-303"/>
</dbReference>
<dbReference type="PDB" id="8RVF">
    <property type="method" value="X-ray"/>
    <property type="resolution" value="1.43 A"/>
    <property type="chains" value="A=1-303"/>
</dbReference>
<dbReference type="PDB" id="9F8A">
    <property type="method" value="X-ray"/>
    <property type="resolution" value="1.56 A"/>
    <property type="chains" value="A=1-303"/>
</dbReference>
<dbReference type="PDB" id="9F8B">
    <property type="method" value="X-ray"/>
    <property type="resolution" value="1.40 A"/>
    <property type="chains" value="A=1-303"/>
</dbReference>
<dbReference type="PDB" id="9F8C">
    <property type="method" value="X-ray"/>
    <property type="resolution" value="1.52 A"/>
    <property type="chains" value="A=1-303"/>
</dbReference>
<dbReference type="PDB" id="9F8D">
    <property type="method" value="X-ray"/>
    <property type="resolution" value="1.14 A"/>
    <property type="chains" value="A=1-303"/>
</dbReference>
<dbReference type="PDB" id="9FY5">
    <property type="method" value="X-ray"/>
    <property type="resolution" value="1.43 A"/>
    <property type="chains" value="A=1-303"/>
</dbReference>
<dbReference type="PDBsum" id="3HJU"/>
<dbReference type="PDBsum" id="3JW8"/>
<dbReference type="PDBsum" id="3JWE"/>
<dbReference type="PDBsum" id="3PE6"/>
<dbReference type="PDBsum" id="4UUQ"/>
<dbReference type="PDBsum" id="5ZUN"/>
<dbReference type="PDBsum" id="6AX1"/>
<dbReference type="PDBsum" id="6BQ0"/>
<dbReference type="PDBsum" id="7L4T"/>
<dbReference type="PDBsum" id="7L4U"/>
<dbReference type="PDBsum" id="7L4W"/>
<dbReference type="PDBsum" id="7L50"/>
<dbReference type="PDBsum" id="7PRM"/>
<dbReference type="PDBsum" id="7ZPG"/>
<dbReference type="PDBsum" id="8AQF"/>
<dbReference type="PDBsum" id="8PTC"/>
<dbReference type="PDBsum" id="8PTQ"/>
<dbReference type="PDBsum" id="8PTR"/>
<dbReference type="PDBsum" id="8RVF"/>
<dbReference type="PDBsum" id="9F8A"/>
<dbReference type="PDBsum" id="9F8B"/>
<dbReference type="PDBsum" id="9F8C"/>
<dbReference type="PDBsum" id="9F8D"/>
<dbReference type="PDBsum" id="9FY5"/>
<dbReference type="SMR" id="Q99685"/>
<dbReference type="BioGRID" id="116471">
    <property type="interactions" value="40"/>
</dbReference>
<dbReference type="FunCoup" id="Q99685">
    <property type="interactions" value="569"/>
</dbReference>
<dbReference type="IntAct" id="Q99685">
    <property type="interactions" value="12"/>
</dbReference>
<dbReference type="MINT" id="Q99685"/>
<dbReference type="STRING" id="9606.ENSP00000265052"/>
<dbReference type="BindingDB" id="Q99685"/>
<dbReference type="ChEMBL" id="CHEMBL4191"/>
<dbReference type="DrugBank" id="DB16036">
    <property type="generic name" value="ABX-1431"/>
</dbReference>
<dbReference type="DrugCentral" id="Q99685"/>
<dbReference type="GuidetoPHARMACOLOGY" id="1399"/>
<dbReference type="SwissLipids" id="SLP:000000315"/>
<dbReference type="ESTHER" id="human-MGLL">
    <property type="family name" value="Monoglyceridelipase_lysophospholip"/>
</dbReference>
<dbReference type="MEROPS" id="S33.979"/>
<dbReference type="GlyGen" id="Q99685">
    <property type="glycosylation" value="1 site, 1 O-linked glycan (1 site)"/>
</dbReference>
<dbReference type="iPTMnet" id="Q99685"/>
<dbReference type="PhosphoSitePlus" id="Q99685"/>
<dbReference type="BioMuta" id="MGLL"/>
<dbReference type="DMDM" id="47117287"/>
<dbReference type="jPOST" id="Q99685"/>
<dbReference type="MassIVE" id="Q99685"/>
<dbReference type="PaxDb" id="9606-ENSP00000265052"/>
<dbReference type="PeptideAtlas" id="Q99685"/>
<dbReference type="ProteomicsDB" id="7025"/>
<dbReference type="ProteomicsDB" id="78397">
    <molecule id="Q99685-1"/>
</dbReference>
<dbReference type="Pumba" id="Q99685"/>
<dbReference type="Antibodypedia" id="1635">
    <property type="antibodies" value="508 antibodies from 36 providers"/>
</dbReference>
<dbReference type="DNASU" id="11343"/>
<dbReference type="Ensembl" id="ENST00000398104.6">
    <molecule id="Q99685-1"/>
    <property type="protein sequence ID" value="ENSP00000381176.1"/>
    <property type="gene ID" value="ENSG00000074416.16"/>
</dbReference>
<dbReference type="Ensembl" id="ENST00000453507.7">
    <molecule id="Q99685-2"/>
    <property type="protein sequence ID" value="ENSP00000404146.2"/>
    <property type="gene ID" value="ENSG00000074416.16"/>
</dbReference>
<dbReference type="GeneID" id="11343"/>
<dbReference type="KEGG" id="hsa:11343"/>
<dbReference type="UCSC" id="uc003ejw.4">
    <molecule id="Q99685-1"/>
    <property type="organism name" value="human"/>
</dbReference>
<dbReference type="AGR" id="HGNC:17038"/>
<dbReference type="CTD" id="11343"/>
<dbReference type="DisGeNET" id="11343"/>
<dbReference type="GeneCards" id="MGLL"/>
<dbReference type="HGNC" id="HGNC:17038">
    <property type="gene designation" value="MGLL"/>
</dbReference>
<dbReference type="HPA" id="ENSG00000074416">
    <property type="expression patterns" value="Low tissue specificity"/>
</dbReference>
<dbReference type="MIM" id="609699">
    <property type="type" value="gene"/>
</dbReference>
<dbReference type="neXtProt" id="NX_Q99685"/>
<dbReference type="OpenTargets" id="ENSG00000074416"/>
<dbReference type="PharmGKB" id="PA30789"/>
<dbReference type="VEuPathDB" id="HostDB:ENSG00000074416"/>
<dbReference type="eggNOG" id="KOG1455">
    <property type="taxonomic scope" value="Eukaryota"/>
</dbReference>
<dbReference type="GeneTree" id="ENSGT00390000011364"/>
<dbReference type="HOGENOM" id="CLU_026209_7_1_1"/>
<dbReference type="InParanoid" id="Q99685"/>
<dbReference type="OMA" id="SYEGWSH"/>
<dbReference type="OrthoDB" id="2498029at2759"/>
<dbReference type="PAN-GO" id="Q99685">
    <property type="GO annotations" value="2 GO annotations based on evolutionary models"/>
</dbReference>
<dbReference type="PhylomeDB" id="Q99685"/>
<dbReference type="TreeFam" id="TF329184"/>
<dbReference type="BioCyc" id="MetaCyc:HS01140-MONOMER"/>
<dbReference type="BRENDA" id="3.1.1.23">
    <property type="organism ID" value="2681"/>
</dbReference>
<dbReference type="PathwayCommons" id="Q99685"/>
<dbReference type="Reactome" id="R-HSA-1482883">
    <property type="pathway name" value="Acyl chain remodeling of DAG and TAG"/>
</dbReference>
<dbReference type="Reactome" id="R-HSA-163560">
    <property type="pathway name" value="Triglyceride catabolism"/>
</dbReference>
<dbReference type="Reactome" id="R-HSA-426048">
    <property type="pathway name" value="Arachidonate production from DAG"/>
</dbReference>
<dbReference type="Reactome" id="R-HSA-9841922">
    <property type="pathway name" value="MLL4 and MLL3 complexes regulate expression of PPARG target genes in adipogenesis and hepatic steatosis"/>
</dbReference>
<dbReference type="SABIO-RK" id="Q99685"/>
<dbReference type="SignaLink" id="Q99685"/>
<dbReference type="SIGNOR" id="Q99685"/>
<dbReference type="UniPathway" id="UPA00256"/>
<dbReference type="BioGRID-ORCS" id="11343">
    <property type="hits" value="17 hits in 1149 CRISPR screens"/>
</dbReference>
<dbReference type="ChiTaRS" id="MGLL">
    <property type="organism name" value="human"/>
</dbReference>
<dbReference type="EvolutionaryTrace" id="Q99685"/>
<dbReference type="GenomeRNAi" id="11343"/>
<dbReference type="Pharos" id="Q99685">
    <property type="development level" value="Tchem"/>
</dbReference>
<dbReference type="PRO" id="PR:Q99685"/>
<dbReference type="Proteomes" id="UP000005640">
    <property type="component" value="Chromosome 3"/>
</dbReference>
<dbReference type="RNAct" id="Q99685">
    <property type="molecule type" value="protein"/>
</dbReference>
<dbReference type="Bgee" id="ENSG00000074416">
    <property type="expression patterns" value="Expressed in decidua and 210 other cell types or tissues"/>
</dbReference>
<dbReference type="ExpressionAtlas" id="Q99685">
    <property type="expression patterns" value="baseline and differential"/>
</dbReference>
<dbReference type="GO" id="GO:0005829">
    <property type="term" value="C:cytosol"/>
    <property type="evidence" value="ECO:0000250"/>
    <property type="project" value="UniProtKB"/>
</dbReference>
<dbReference type="GO" id="GO:0005789">
    <property type="term" value="C:endoplasmic reticulum membrane"/>
    <property type="evidence" value="ECO:0000304"/>
    <property type="project" value="Reactome"/>
</dbReference>
<dbReference type="GO" id="GO:0016020">
    <property type="term" value="C:membrane"/>
    <property type="evidence" value="ECO:0000250"/>
    <property type="project" value="UniProtKB"/>
</dbReference>
<dbReference type="GO" id="GO:0005886">
    <property type="term" value="C:plasma membrane"/>
    <property type="evidence" value="ECO:0000304"/>
    <property type="project" value="Reactome"/>
</dbReference>
<dbReference type="GO" id="GO:0004622">
    <property type="term" value="F:lysophospholipase activity"/>
    <property type="evidence" value="ECO:0000304"/>
    <property type="project" value="ProtInc"/>
</dbReference>
<dbReference type="GO" id="GO:0047372">
    <property type="term" value="F:monoacylglycerol lipase activity"/>
    <property type="evidence" value="ECO:0000314"/>
    <property type="project" value="UniProtKB"/>
</dbReference>
<dbReference type="GO" id="GO:0042803">
    <property type="term" value="F:protein homodimerization activity"/>
    <property type="evidence" value="ECO:0000353"/>
    <property type="project" value="UniProtKB"/>
</dbReference>
<dbReference type="GO" id="GO:0046464">
    <property type="term" value="P:acylglycerol catabolic process"/>
    <property type="evidence" value="ECO:0000314"/>
    <property type="project" value="UniProtKB"/>
</dbReference>
<dbReference type="GO" id="GO:0019369">
    <property type="term" value="P:arachidonate metabolic process"/>
    <property type="evidence" value="ECO:0000250"/>
    <property type="project" value="UniProtKB"/>
</dbReference>
<dbReference type="GO" id="GO:0006633">
    <property type="term" value="P:fatty acid biosynthetic process"/>
    <property type="evidence" value="ECO:0007669"/>
    <property type="project" value="UniProtKB-KW"/>
</dbReference>
<dbReference type="GO" id="GO:0006954">
    <property type="term" value="P:inflammatory response"/>
    <property type="evidence" value="ECO:0000304"/>
    <property type="project" value="ProtInc"/>
</dbReference>
<dbReference type="GO" id="GO:0006629">
    <property type="term" value="P:lipid metabolic process"/>
    <property type="evidence" value="ECO:0000304"/>
    <property type="project" value="ProtInc"/>
</dbReference>
<dbReference type="GO" id="GO:0052651">
    <property type="term" value="P:monoacylglycerol catabolic process"/>
    <property type="evidence" value="ECO:0000250"/>
    <property type="project" value="UniProtKB"/>
</dbReference>
<dbReference type="GO" id="GO:2000124">
    <property type="term" value="P:regulation of endocannabinoid signaling pathway"/>
    <property type="evidence" value="ECO:0000250"/>
    <property type="project" value="UniProtKB"/>
</dbReference>
<dbReference type="GO" id="GO:0050727">
    <property type="term" value="P:regulation of inflammatory response"/>
    <property type="evidence" value="ECO:0000250"/>
    <property type="project" value="UniProtKB"/>
</dbReference>
<dbReference type="GO" id="GO:0051930">
    <property type="term" value="P:regulation of sensory perception of pain"/>
    <property type="evidence" value="ECO:0000250"/>
    <property type="project" value="UniProtKB"/>
</dbReference>
<dbReference type="GO" id="GO:0009966">
    <property type="term" value="P:regulation of signal transduction"/>
    <property type="evidence" value="ECO:0000250"/>
    <property type="project" value="UniProtKB"/>
</dbReference>
<dbReference type="GO" id="GO:0019433">
    <property type="term" value="P:triglyceride catabolic process"/>
    <property type="evidence" value="ECO:0007669"/>
    <property type="project" value="UniProtKB-UniPathway"/>
</dbReference>
<dbReference type="FunFam" id="3.40.50.1820:FF:000066">
    <property type="entry name" value="Monoglyceride lipase"/>
    <property type="match status" value="1"/>
</dbReference>
<dbReference type="Gene3D" id="3.40.50.1820">
    <property type="entry name" value="alpha/beta hydrolase"/>
    <property type="match status" value="1"/>
</dbReference>
<dbReference type="InterPro" id="IPR000073">
    <property type="entry name" value="AB_hydrolase_1"/>
</dbReference>
<dbReference type="InterPro" id="IPR029058">
    <property type="entry name" value="AB_hydrolase_fold"/>
</dbReference>
<dbReference type="InterPro" id="IPR022742">
    <property type="entry name" value="Hydrolase_4"/>
</dbReference>
<dbReference type="InterPro" id="IPR051044">
    <property type="entry name" value="MAG_DAG_Lipase"/>
</dbReference>
<dbReference type="PANTHER" id="PTHR11614">
    <property type="entry name" value="PHOSPHOLIPASE-RELATED"/>
    <property type="match status" value="1"/>
</dbReference>
<dbReference type="Pfam" id="PF12146">
    <property type="entry name" value="Hydrolase_4"/>
    <property type="match status" value="1"/>
</dbReference>
<dbReference type="PRINTS" id="PR00111">
    <property type="entry name" value="ABHYDROLASE"/>
</dbReference>
<dbReference type="SUPFAM" id="SSF53474">
    <property type="entry name" value="alpha/beta-Hydrolases"/>
    <property type="match status" value="1"/>
</dbReference>
<dbReference type="PROSITE" id="PS00120">
    <property type="entry name" value="LIPASE_SER"/>
    <property type="match status" value="1"/>
</dbReference>
<feature type="chain" id="PRO_0000191265" description="Monoglyceride lipase">
    <location>
        <begin position="1"/>
        <end position="303"/>
    </location>
</feature>
<feature type="active site" description="Nucleophile" evidence="5">
    <location>
        <position position="122"/>
    </location>
</feature>
<feature type="active site" description="Charge relay system" evidence="16">
    <location>
        <position position="239"/>
    </location>
</feature>
<feature type="active site" description="Charge relay system" evidence="16">
    <location>
        <position position="269"/>
    </location>
</feature>
<feature type="modified residue" description="Phosphothreonine" evidence="2">
    <location>
        <position position="10"/>
    </location>
</feature>
<feature type="modified residue" description="3'-nitrotyrosine" evidence="2">
    <location>
        <position position="58"/>
    </location>
</feature>
<feature type="splice variant" id="VSP_045138" description="In isoform 2." evidence="12">
    <original>M</original>
    <variation>METGPEDPSSM</variation>
    <location>
        <position position="1"/>
    </location>
</feature>
<feature type="splice variant" id="VSP_045139" description="In isoform 2." evidence="12">
    <location>
        <begin position="161"/>
        <end position="190"/>
    </location>
</feature>
<feature type="mutagenesis site" description="Does not affect ability to hydrolyze 1- or 2-monoacylglycerol." evidence="10">
    <original>Y</original>
    <variation>F</variation>
    <location>
        <position position="194"/>
    </location>
</feature>
<feature type="mutagenesis site" description="Does not affect ability to hydrolyze 1- or 2-monoacylglycerol." evidence="10">
    <original>C</original>
    <variation>A</variation>
    <location>
        <position position="201"/>
    </location>
</feature>
<feature type="mutagenesis site" description="Does not affect ability to hydrolyze 1- or 2-monoacylglycerol." evidence="10">
    <original>C</original>
    <variation>A</variation>
    <location>
        <position position="208"/>
    </location>
</feature>
<feature type="mutagenesis site" description="Reduced 1-monoacylglycerol lipase activity." evidence="10">
    <original>C</original>
    <variation>A</variation>
    <location>
        <position position="242"/>
    </location>
</feature>
<feature type="sequence conflict" description="In Ref. 3; BAG52334." evidence="15" ref="3">
    <original>L</original>
    <variation>P</variation>
    <location>
        <position position="144"/>
    </location>
</feature>
<feature type="helix" evidence="20">
    <location>
        <begin position="16"/>
        <end position="18"/>
    </location>
</feature>
<feature type="strand" evidence="20">
    <location>
        <begin position="21"/>
        <end position="23"/>
    </location>
</feature>
<feature type="strand" evidence="20">
    <location>
        <begin position="29"/>
        <end position="35"/>
    </location>
</feature>
<feature type="strand" evidence="19">
    <location>
        <begin position="38"/>
        <end position="40"/>
    </location>
</feature>
<feature type="strand" evidence="20">
    <location>
        <begin position="42"/>
        <end position="48"/>
    </location>
</feature>
<feature type="helix" evidence="20">
    <location>
        <begin position="55"/>
        <end position="58"/>
    </location>
</feature>
<feature type="helix" evidence="20">
    <location>
        <begin position="59"/>
        <end position="67"/>
    </location>
</feature>
<feature type="strand" evidence="20">
    <location>
        <begin position="70"/>
        <end position="75"/>
    </location>
</feature>
<feature type="helix" evidence="20">
    <location>
        <begin position="94"/>
        <end position="110"/>
    </location>
</feature>
<feature type="strand" evidence="20">
    <location>
        <begin position="116"/>
        <end position="122"/>
    </location>
</feature>
<feature type="helix" evidence="20">
    <location>
        <begin position="124"/>
        <end position="134"/>
    </location>
</feature>
<feature type="turn" evidence="20">
    <location>
        <begin position="136"/>
        <end position="138"/>
    </location>
</feature>
<feature type="strand" evidence="20">
    <location>
        <begin position="140"/>
        <end position="151"/>
    </location>
</feature>
<feature type="turn" evidence="20">
    <location>
        <begin position="153"/>
        <end position="155"/>
    </location>
</feature>
<feature type="helix" evidence="20">
    <location>
        <begin position="158"/>
        <end position="170"/>
    </location>
</feature>
<feature type="helix" evidence="20">
    <location>
        <begin position="181"/>
        <end position="183"/>
    </location>
</feature>
<feature type="helix" evidence="20">
    <location>
        <begin position="188"/>
        <end position="196"/>
    </location>
</feature>
<feature type="strand" evidence="18">
    <location>
        <begin position="198"/>
        <end position="200"/>
    </location>
</feature>
<feature type="helix" evidence="20">
    <location>
        <begin position="207"/>
        <end position="223"/>
    </location>
</feature>
<feature type="helix" evidence="20">
    <location>
        <begin position="224"/>
        <end position="226"/>
    </location>
</feature>
<feature type="strand" evidence="20">
    <location>
        <begin position="231"/>
        <end position="236"/>
    </location>
</feature>
<feature type="strand" evidence="20">
    <location>
        <begin position="240"/>
        <end position="242"/>
    </location>
</feature>
<feature type="helix" evidence="20">
    <location>
        <begin position="244"/>
        <end position="253"/>
    </location>
</feature>
<feature type="strand" evidence="20">
    <location>
        <begin position="257"/>
        <end position="264"/>
    </location>
</feature>
<feature type="helix" evidence="20">
    <location>
        <begin position="271"/>
        <end position="273"/>
    </location>
</feature>
<feature type="helix" evidence="20">
    <location>
        <begin position="276"/>
        <end position="292"/>
    </location>
</feature>
<organism>
    <name type="scientific">Homo sapiens</name>
    <name type="common">Human</name>
    <dbReference type="NCBI Taxonomy" id="9606"/>
    <lineage>
        <taxon>Eukaryota</taxon>
        <taxon>Metazoa</taxon>
        <taxon>Chordata</taxon>
        <taxon>Craniata</taxon>
        <taxon>Vertebrata</taxon>
        <taxon>Euteleostomi</taxon>
        <taxon>Mammalia</taxon>
        <taxon>Eutheria</taxon>
        <taxon>Euarchontoglires</taxon>
        <taxon>Primates</taxon>
        <taxon>Haplorrhini</taxon>
        <taxon>Catarrhini</taxon>
        <taxon>Hominidae</taxon>
        <taxon>Homo</taxon>
    </lineage>
</organism>
<accession>Q99685</accession>
<accession>B3KRC2</accession>
<accession>B7Z9D1</accession>
<accession>Q6IBG9</accession>
<accession>Q96AA5</accession>
<gene>
    <name evidence="17" type="primary">MGLL</name>
</gene>
<comment type="function">
    <text evidence="4 7 8 9 10">Converts monoacylglycerides to free fatty acids and glycerol (PubMed:19029917, PubMed:20079333, PubMed:21049984, PubMed:22969151, PubMed:24368842). Hydrolyzes the endocannabinoid 2-arachidonoylglycerol, and thereby contributes to the regulation of endocannabinoid signaling, nociperception and perception of pain (PubMed:19029917, PubMed:20079333, PubMed:21049984, PubMed:22969151, PubMed:24368842). Regulates the levels of fatty acids that serve as signaling molecules and promote cancer cell migration, invasion and tumor growth (PubMed:20079333).</text>
</comment>
<comment type="catalytic activity">
    <reaction evidence="4 7 8 9 10">
        <text>Hydrolyzes glycerol monoesters of long-chain fatty acids.</text>
        <dbReference type="EC" id="3.1.1.23"/>
    </reaction>
</comment>
<comment type="catalytic activity">
    <reaction evidence="7 9 10">
        <text>a 1-acylglycerol + H2O = glycerol + a fatty acid + H(+)</text>
        <dbReference type="Rhea" id="RHEA:34019"/>
        <dbReference type="ChEBI" id="CHEBI:15377"/>
        <dbReference type="ChEBI" id="CHEBI:15378"/>
        <dbReference type="ChEBI" id="CHEBI:17754"/>
        <dbReference type="ChEBI" id="CHEBI:28868"/>
        <dbReference type="ChEBI" id="CHEBI:35759"/>
    </reaction>
    <physiologicalReaction direction="left-to-right" evidence="7 9 10">
        <dbReference type="Rhea" id="RHEA:34020"/>
    </physiologicalReaction>
</comment>
<comment type="catalytic activity">
    <reaction evidence="4 7 8 9 10">
        <text>a 2-acylglycerol + H2O = glycerol + a fatty acid + H(+)</text>
        <dbReference type="Rhea" id="RHEA:44688"/>
        <dbReference type="ChEBI" id="CHEBI:15377"/>
        <dbReference type="ChEBI" id="CHEBI:15378"/>
        <dbReference type="ChEBI" id="CHEBI:17389"/>
        <dbReference type="ChEBI" id="CHEBI:17754"/>
        <dbReference type="ChEBI" id="CHEBI:28868"/>
    </reaction>
    <physiologicalReaction direction="left-to-right" evidence="4 7 8 9 10">
        <dbReference type="Rhea" id="RHEA:44689"/>
    </physiologicalReaction>
</comment>
<comment type="catalytic activity">
    <reaction evidence="9 10">
        <text>1-octanoylglycerol + H2O = octanoate + glycerol + H(+)</text>
        <dbReference type="Rhea" id="RHEA:44328"/>
        <dbReference type="ChEBI" id="CHEBI:15377"/>
        <dbReference type="ChEBI" id="CHEBI:15378"/>
        <dbReference type="ChEBI" id="CHEBI:17754"/>
        <dbReference type="ChEBI" id="CHEBI:25646"/>
        <dbReference type="ChEBI" id="CHEBI:85241"/>
    </reaction>
    <physiologicalReaction direction="left-to-right" evidence="9 10">
        <dbReference type="Rhea" id="RHEA:44329"/>
    </physiologicalReaction>
</comment>
<comment type="catalytic activity">
    <reaction evidence="4 7 8 9 10">
        <text>2-(5Z,8Z,11Z,14Z-eicosatetraenoyl)-glycerol + H2O = glycerol + (5Z,8Z,11Z,14Z)-eicosatetraenoate + H(+)</text>
        <dbReference type="Rhea" id="RHEA:26132"/>
        <dbReference type="ChEBI" id="CHEBI:15377"/>
        <dbReference type="ChEBI" id="CHEBI:15378"/>
        <dbReference type="ChEBI" id="CHEBI:17754"/>
        <dbReference type="ChEBI" id="CHEBI:32395"/>
        <dbReference type="ChEBI" id="CHEBI:52392"/>
    </reaction>
    <physiologicalReaction direction="left-to-right" evidence="4 7 8 9 10">
        <dbReference type="Rhea" id="RHEA:26133"/>
    </physiologicalReaction>
</comment>
<comment type="catalytic activity">
    <reaction evidence="9 10">
        <text>1-decanoylglycerol + H2O = decanoate + glycerol + H(+)</text>
        <dbReference type="Rhea" id="RHEA:44320"/>
        <dbReference type="ChEBI" id="CHEBI:15377"/>
        <dbReference type="ChEBI" id="CHEBI:15378"/>
        <dbReference type="ChEBI" id="CHEBI:17754"/>
        <dbReference type="ChEBI" id="CHEBI:27689"/>
        <dbReference type="ChEBI" id="CHEBI:75547"/>
    </reaction>
    <physiologicalReaction direction="left-to-right" evidence="9 10">
        <dbReference type="Rhea" id="RHEA:44321"/>
    </physiologicalReaction>
</comment>
<comment type="catalytic activity">
    <reaction evidence="9 10">
        <text>1-dodecanoylglycerol + H2O = dodecanoate + glycerol + H(+)</text>
        <dbReference type="Rhea" id="RHEA:44316"/>
        <dbReference type="ChEBI" id="CHEBI:15377"/>
        <dbReference type="ChEBI" id="CHEBI:15378"/>
        <dbReference type="ChEBI" id="CHEBI:17754"/>
        <dbReference type="ChEBI" id="CHEBI:18262"/>
        <dbReference type="ChEBI" id="CHEBI:75539"/>
    </reaction>
    <physiologicalReaction direction="left-to-right" evidence="9 10">
        <dbReference type="Rhea" id="RHEA:44317"/>
    </physiologicalReaction>
</comment>
<comment type="catalytic activity">
    <reaction evidence="9 10">
        <text>1-tetradecanoylglycerol + H2O = tetradecanoate + glycerol + H(+)</text>
        <dbReference type="Rhea" id="RHEA:44312"/>
        <dbReference type="ChEBI" id="CHEBI:15377"/>
        <dbReference type="ChEBI" id="CHEBI:15378"/>
        <dbReference type="ChEBI" id="CHEBI:17754"/>
        <dbReference type="ChEBI" id="CHEBI:30807"/>
        <dbReference type="ChEBI" id="CHEBI:75562"/>
    </reaction>
    <physiologicalReaction direction="left-to-right" evidence="9 10">
        <dbReference type="Rhea" id="RHEA:44313"/>
    </physiologicalReaction>
</comment>
<comment type="catalytic activity">
    <reaction evidence="9 10">
        <text>2-hexadecanoylglycerol + H2O = glycerol + hexadecanoate + H(+)</text>
        <dbReference type="Rhea" id="RHEA:39963"/>
        <dbReference type="ChEBI" id="CHEBI:7896"/>
        <dbReference type="ChEBI" id="CHEBI:15377"/>
        <dbReference type="ChEBI" id="CHEBI:15378"/>
        <dbReference type="ChEBI" id="CHEBI:17754"/>
        <dbReference type="ChEBI" id="CHEBI:75455"/>
    </reaction>
    <physiologicalReaction direction="left-to-right" evidence="9 10">
        <dbReference type="Rhea" id="RHEA:39964"/>
    </physiologicalReaction>
</comment>
<comment type="catalytic activity">
    <reaction evidence="7 9 10">
        <text>1-(9Z-octadecenoyl)-glycerol + H2O = glycerol + (9Z)-octadecenoate + H(+)</text>
        <dbReference type="Rhea" id="RHEA:38487"/>
        <dbReference type="ChEBI" id="CHEBI:15377"/>
        <dbReference type="ChEBI" id="CHEBI:15378"/>
        <dbReference type="ChEBI" id="CHEBI:17754"/>
        <dbReference type="ChEBI" id="CHEBI:30823"/>
        <dbReference type="ChEBI" id="CHEBI:75342"/>
    </reaction>
    <physiologicalReaction direction="left-to-right" evidence="7 9 10">
        <dbReference type="Rhea" id="RHEA:38488"/>
    </physiologicalReaction>
</comment>
<comment type="catalytic activity">
    <reaction evidence="9 10">
        <text>2-(9Z-octadecenoyl)-glycerol + H2O = glycerol + (9Z)-octadecenoate + H(+)</text>
        <dbReference type="Rhea" id="RHEA:38491"/>
        <dbReference type="ChEBI" id="CHEBI:15377"/>
        <dbReference type="ChEBI" id="CHEBI:15378"/>
        <dbReference type="ChEBI" id="CHEBI:17754"/>
        <dbReference type="ChEBI" id="CHEBI:30823"/>
        <dbReference type="ChEBI" id="CHEBI:73990"/>
    </reaction>
    <physiologicalReaction direction="left-to-right" evidence="9 10">
        <dbReference type="Rhea" id="RHEA:38492"/>
    </physiologicalReaction>
</comment>
<comment type="catalytic activity">
    <reaction evidence="9 10">
        <text>2-(9Z,12Z-octadecadienoyl)-glycerol + H2O = (9Z,12Z)-octadecadienoate + glycerol + H(+)</text>
        <dbReference type="Rhea" id="RHEA:44732"/>
        <dbReference type="ChEBI" id="CHEBI:15377"/>
        <dbReference type="ChEBI" id="CHEBI:15378"/>
        <dbReference type="ChEBI" id="CHEBI:17754"/>
        <dbReference type="ChEBI" id="CHEBI:30245"/>
        <dbReference type="ChEBI" id="CHEBI:75457"/>
    </reaction>
    <physiologicalReaction direction="left-to-right" evidence="9 10">
        <dbReference type="Rhea" id="RHEA:44733"/>
    </physiologicalReaction>
</comment>
<comment type="catalytic activity">
    <reaction evidence="9 10">
        <text>1-(5Z,8Z,11Z,14Z-eicosatetraenoyl)-glycerol + H2O = glycerol + (5Z,8Z,11Z,14Z)-eicosatetraenoate + H(+)</text>
        <dbReference type="Rhea" id="RHEA:44728"/>
        <dbReference type="ChEBI" id="CHEBI:15377"/>
        <dbReference type="ChEBI" id="CHEBI:15378"/>
        <dbReference type="ChEBI" id="CHEBI:17754"/>
        <dbReference type="ChEBI" id="CHEBI:32395"/>
        <dbReference type="ChEBI" id="CHEBI:75612"/>
    </reaction>
    <physiologicalReaction direction="left-to-right" evidence="9 10">
        <dbReference type="Rhea" id="RHEA:44729"/>
    </physiologicalReaction>
</comment>
<comment type="catalytic activity">
    <reaction evidence="9 10">
        <text>1-(9Z,12Z-octadecadienoyl)-glycerol + H2O = (9Z,12Z)-octadecadienoate + glycerol + H(+)</text>
        <dbReference type="Rhea" id="RHEA:48428"/>
        <dbReference type="ChEBI" id="CHEBI:15377"/>
        <dbReference type="ChEBI" id="CHEBI:15378"/>
        <dbReference type="ChEBI" id="CHEBI:17754"/>
        <dbReference type="ChEBI" id="CHEBI:30245"/>
        <dbReference type="ChEBI" id="CHEBI:75568"/>
    </reaction>
    <physiologicalReaction direction="left-to-right" evidence="9 10">
        <dbReference type="Rhea" id="RHEA:48429"/>
    </physiologicalReaction>
</comment>
<comment type="catalytic activity">
    <reaction evidence="7">
        <text>1-hexadecanoylglycerol + H2O = glycerol + hexadecanoate + H(+)</text>
        <dbReference type="Rhea" id="RHEA:39959"/>
        <dbReference type="ChEBI" id="CHEBI:7896"/>
        <dbReference type="ChEBI" id="CHEBI:15377"/>
        <dbReference type="ChEBI" id="CHEBI:15378"/>
        <dbReference type="ChEBI" id="CHEBI:17754"/>
        <dbReference type="ChEBI" id="CHEBI:69081"/>
    </reaction>
    <physiologicalReaction direction="left-to-right" evidence="7">
        <dbReference type="Rhea" id="RHEA:39960"/>
    </physiologicalReaction>
</comment>
<comment type="catalytic activity">
    <reaction evidence="7">
        <text>1-octadecanoylglycerol + H2O = octadecanoate + glycerol + H(+)</text>
        <dbReference type="Rhea" id="RHEA:38363"/>
        <dbReference type="ChEBI" id="CHEBI:15377"/>
        <dbReference type="ChEBI" id="CHEBI:15378"/>
        <dbReference type="ChEBI" id="CHEBI:17754"/>
        <dbReference type="ChEBI" id="CHEBI:25629"/>
        <dbReference type="ChEBI" id="CHEBI:75555"/>
    </reaction>
    <physiologicalReaction direction="left-to-right" evidence="7">
        <dbReference type="Rhea" id="RHEA:38364"/>
    </physiologicalReaction>
</comment>
<comment type="catalytic activity">
    <reaction evidence="8 10">
        <text>prostaglandin E2 1-glyceryl ester + H2O = prostaglandin E2 + glycerol + H(+)</text>
        <dbReference type="Rhea" id="RHEA:48296"/>
        <dbReference type="ChEBI" id="CHEBI:15377"/>
        <dbReference type="ChEBI" id="CHEBI:15378"/>
        <dbReference type="ChEBI" id="CHEBI:17754"/>
        <dbReference type="ChEBI" id="CHEBI:90230"/>
        <dbReference type="ChEBI" id="CHEBI:606564"/>
    </reaction>
    <physiologicalReaction direction="left-to-right" evidence="8 10">
        <dbReference type="Rhea" id="RHEA:48297"/>
    </physiologicalReaction>
</comment>
<comment type="catalytic activity">
    <reaction evidence="10">
        <text>prostaglandin D2-1-glycerol ester + H2O = prostaglandin D2 + glycerol + H(+)</text>
        <dbReference type="Rhea" id="RHEA:45412"/>
        <dbReference type="ChEBI" id="CHEBI:15377"/>
        <dbReference type="ChEBI" id="CHEBI:15378"/>
        <dbReference type="ChEBI" id="CHEBI:17754"/>
        <dbReference type="ChEBI" id="CHEBI:57406"/>
        <dbReference type="ChEBI" id="CHEBI:85232"/>
    </reaction>
    <physiologicalReaction direction="left-to-right" evidence="10">
        <dbReference type="Rhea" id="RHEA:45413"/>
    </physiologicalReaction>
</comment>
<comment type="catalytic activity">
    <reaction evidence="10">
        <text>2-glyceryl-15-deoxy-Delta(12,14)-prostaglandin J2 + H2O = 15-deoxy-Delta(12,14)-prostaglandin J2 + glycerol + H(+)</text>
        <dbReference type="Rhea" id="RHEA:45416"/>
        <dbReference type="ChEBI" id="CHEBI:15377"/>
        <dbReference type="ChEBI" id="CHEBI:15378"/>
        <dbReference type="ChEBI" id="CHEBI:17754"/>
        <dbReference type="ChEBI" id="CHEBI:85236"/>
        <dbReference type="ChEBI" id="CHEBI:85238"/>
    </reaction>
    <physiologicalReaction direction="left-to-right" evidence="10">
        <dbReference type="Rhea" id="RHEA:45417"/>
    </physiologicalReaction>
</comment>
<comment type="catalytic activity">
    <reaction evidence="8">
        <text>prostaglandin F2alpha 1-glyceryl ester + H2O = prostaglandin F2alpha + glycerol + H(+)</text>
        <dbReference type="Rhea" id="RHEA:48300"/>
        <dbReference type="ChEBI" id="CHEBI:15377"/>
        <dbReference type="ChEBI" id="CHEBI:15378"/>
        <dbReference type="ChEBI" id="CHEBI:17754"/>
        <dbReference type="ChEBI" id="CHEBI:57404"/>
        <dbReference type="ChEBI" id="CHEBI:90233"/>
    </reaction>
    <physiologicalReaction direction="left-to-right" evidence="8">
        <dbReference type="Rhea" id="RHEA:48301"/>
    </physiologicalReaction>
</comment>
<comment type="biophysicochemical properties">
    <kinetics>
        <KM evidence="9">110 uM for 2-arachidonoyglycerol</KM>
        <KM evidence="10">15 uM for 2-glyceryl-15-deoxy-Delta(12,14)-prostaglandin J2 (15d-PGJ(2)-G)</KM>
        <Vmax evidence="9">120.0 nmol/min/mg enzyme toward 2-arachidonoyglycerol</Vmax>
        <Vmax evidence="10">89.0 nmol/min/mg enzyme toward 2-glyceryl-15-deoxy-Delta(12,14)-prostaglandin J2 (15d-PGJ(2)-G)</Vmax>
    </kinetics>
</comment>
<comment type="pathway">
    <text evidence="2">Glycerolipid metabolism; triacylglycerol degradation.</text>
</comment>
<comment type="subunit">
    <text evidence="5 6">Homodimer.</text>
</comment>
<comment type="interaction">
    <interactant intactId="EBI-721306">
        <id>Q99685</id>
    </interactant>
    <interactant intactId="EBI-491169">
        <id>P07550</id>
        <label>ADRB2</label>
    </interactant>
    <organismsDiffer>false</organismsDiffer>
    <experiments>2</experiments>
</comment>
<comment type="interaction">
    <interactant intactId="EBI-721306">
        <id>Q99685</id>
    </interactant>
    <interactant intactId="EBI-749311">
        <id>P37235</id>
        <label>HPCAL1</label>
    </interactant>
    <organismsDiffer>false</organismsDiffer>
    <experiments>3</experiments>
</comment>
<comment type="subcellular location">
    <subcellularLocation>
        <location evidence="2">Cytoplasm</location>
        <location evidence="2">Cytosol</location>
    </subcellularLocation>
    <subcellularLocation>
        <location evidence="2">Membrane</location>
        <topology evidence="2">Peripheral membrane protein</topology>
    </subcellularLocation>
</comment>
<comment type="alternative products">
    <event type="alternative splicing"/>
    <isoform>
        <id>Q99685-1</id>
        <name>1</name>
        <sequence type="displayed"/>
    </isoform>
    <isoform>
        <id>Q99685-2</id>
        <name>2</name>
        <sequence type="described" ref="VSP_045138 VSP_045139"/>
    </isoform>
</comment>
<comment type="tissue specificity">
    <text evidence="3">Detected in adipose tissue, lung, liver, kidney, brain and heart.</text>
</comment>
<comment type="miscellaneous">
    <text evidence="1">Short-term inhibition causes analgesia, while long-term inhibition causes tolerance to endocannabinoids acting on brain cannabinoid receptor CNR1, and a reduction in brain cannabinoid receptor CNR1 activity.</text>
</comment>
<comment type="similarity">
    <text evidence="15">Belongs to the AB hydrolase superfamily. Monoacylglycerol lipase family.</text>
</comment>
<comment type="sequence caution" evidence="15">
    <conflict type="erroneous initiation">
        <sequence resource="EMBL-CDS" id="AAB39616"/>
    </conflict>
    <text>Extended N-terminus.</text>
</comment>
<comment type="sequence caution" evidence="15">
    <conflict type="erroneous initiation">
        <sequence resource="EMBL-CDS" id="AAH00551"/>
    </conflict>
    <text>Extended N-terminus.</text>
</comment>
<comment type="sequence caution" evidence="15">
    <conflict type="erroneous initiation">
        <sequence resource="EMBL-CDS" id="AAH06230"/>
    </conflict>
    <text>Extended N-terminus.</text>
</comment>
<comment type="sequence caution" evidence="15">
    <conflict type="erroneous initiation">
        <sequence resource="EMBL-CDS" id="BAG37910"/>
    </conflict>
    <text>Extended N-terminus.</text>
</comment>
<comment type="sequence caution" evidence="15">
    <conflict type="erroneous initiation">
        <sequence resource="EMBL-CDS" id="CAG33116"/>
    </conflict>
    <text>Extended N-terminus.</text>
</comment>
<comment type="sequence caution" evidence="15">
    <conflict type="erroneous initiation">
        <sequence resource="EMBL-CDS" id="EAW79330"/>
    </conflict>
    <text>Extended N-terminus.</text>
</comment>
<comment type="sequence caution" evidence="15">
    <conflict type="erroneous initiation">
        <sequence resource="EMBL-CDS" id="EAW79331"/>
    </conflict>
    <text>Extended N-terminus.</text>
</comment>
<reference key="1">
    <citation type="journal article" date="1997" name="Virus Res.">
        <title>A novel poxvirus gene and its human homolog are similar to an E. coli lysophospholipase.</title>
        <authorList>
            <person name="Wall E.M."/>
            <person name="Cao J.X."/>
            <person name="Chen N."/>
            <person name="Buller R.M.L."/>
            <person name="Upton C."/>
        </authorList>
    </citation>
    <scope>NUCLEOTIDE SEQUENCE [MRNA] (ISOFORM 1)</scope>
    <source>
        <tissue>Lung</tissue>
    </source>
</reference>
<reference key="2">
    <citation type="journal article" date="2001" name="Gene">
        <title>Exon-intron organization and chromosomal localization of the mouse monoglyceride lipase gene.</title>
        <authorList>
            <person name="Karlsson M."/>
            <person name="Reue K."/>
            <person name="Xia Y.-R."/>
            <person name="Lusis A.J."/>
            <person name="Langin D."/>
            <person name="Tornqvist H."/>
            <person name="Holm C."/>
        </authorList>
    </citation>
    <scope>NUCLEOTIDE SEQUENCE [MRNA] (ISOFORM 1)</scope>
    <scope>TISSUE SPECIFICITY</scope>
    <source>
        <tissue>Adipose tissue</tissue>
    </source>
</reference>
<reference key="3">
    <citation type="journal article" date="2004" name="Nat. Genet.">
        <title>Complete sequencing and characterization of 21,243 full-length human cDNAs.</title>
        <authorList>
            <person name="Ota T."/>
            <person name="Suzuki Y."/>
            <person name="Nishikawa T."/>
            <person name="Otsuki T."/>
            <person name="Sugiyama T."/>
            <person name="Irie R."/>
            <person name="Wakamatsu A."/>
            <person name="Hayashi K."/>
            <person name="Sato H."/>
            <person name="Nagai K."/>
            <person name="Kimura K."/>
            <person name="Makita H."/>
            <person name="Sekine M."/>
            <person name="Obayashi M."/>
            <person name="Nishi T."/>
            <person name="Shibahara T."/>
            <person name="Tanaka T."/>
            <person name="Ishii S."/>
            <person name="Yamamoto J."/>
            <person name="Saito K."/>
            <person name="Kawai Y."/>
            <person name="Isono Y."/>
            <person name="Nakamura Y."/>
            <person name="Nagahari K."/>
            <person name="Murakami K."/>
            <person name="Yasuda T."/>
            <person name="Iwayanagi T."/>
            <person name="Wagatsuma M."/>
            <person name="Shiratori A."/>
            <person name="Sudo H."/>
            <person name="Hosoiri T."/>
            <person name="Kaku Y."/>
            <person name="Kodaira H."/>
            <person name="Kondo H."/>
            <person name="Sugawara M."/>
            <person name="Takahashi M."/>
            <person name="Kanda K."/>
            <person name="Yokoi T."/>
            <person name="Furuya T."/>
            <person name="Kikkawa E."/>
            <person name="Omura Y."/>
            <person name="Abe K."/>
            <person name="Kamihara K."/>
            <person name="Katsuta N."/>
            <person name="Sato K."/>
            <person name="Tanikawa M."/>
            <person name="Yamazaki M."/>
            <person name="Ninomiya K."/>
            <person name="Ishibashi T."/>
            <person name="Yamashita H."/>
            <person name="Murakawa K."/>
            <person name="Fujimori K."/>
            <person name="Tanai H."/>
            <person name="Kimata M."/>
            <person name="Watanabe M."/>
            <person name="Hiraoka S."/>
            <person name="Chiba Y."/>
            <person name="Ishida S."/>
            <person name="Ono Y."/>
            <person name="Takiguchi S."/>
            <person name="Watanabe S."/>
            <person name="Yosida M."/>
            <person name="Hotuta T."/>
            <person name="Kusano J."/>
            <person name="Kanehori K."/>
            <person name="Takahashi-Fujii A."/>
            <person name="Hara H."/>
            <person name="Tanase T.-O."/>
            <person name="Nomura Y."/>
            <person name="Togiya S."/>
            <person name="Komai F."/>
            <person name="Hara R."/>
            <person name="Takeuchi K."/>
            <person name="Arita M."/>
            <person name="Imose N."/>
            <person name="Musashino K."/>
            <person name="Yuuki H."/>
            <person name="Oshima A."/>
            <person name="Sasaki N."/>
            <person name="Aotsuka S."/>
            <person name="Yoshikawa Y."/>
            <person name="Matsunawa H."/>
            <person name="Ichihara T."/>
            <person name="Shiohata N."/>
            <person name="Sano S."/>
            <person name="Moriya S."/>
            <person name="Momiyama H."/>
            <person name="Satoh N."/>
            <person name="Takami S."/>
            <person name="Terashima Y."/>
            <person name="Suzuki O."/>
            <person name="Nakagawa S."/>
            <person name="Senoh A."/>
            <person name="Mizoguchi H."/>
            <person name="Goto Y."/>
            <person name="Shimizu F."/>
            <person name="Wakebe H."/>
            <person name="Hishigaki H."/>
            <person name="Watanabe T."/>
            <person name="Sugiyama A."/>
            <person name="Takemoto M."/>
            <person name="Kawakami B."/>
            <person name="Yamazaki M."/>
            <person name="Watanabe K."/>
            <person name="Kumagai A."/>
            <person name="Itakura S."/>
            <person name="Fukuzumi Y."/>
            <person name="Fujimori Y."/>
            <person name="Komiyama M."/>
            <person name="Tashiro H."/>
            <person name="Tanigami A."/>
            <person name="Fujiwara T."/>
            <person name="Ono T."/>
            <person name="Yamada K."/>
            <person name="Fujii Y."/>
            <person name="Ozaki K."/>
            <person name="Hirao M."/>
            <person name="Ohmori Y."/>
            <person name="Kawabata A."/>
            <person name="Hikiji T."/>
            <person name="Kobatake N."/>
            <person name="Inagaki H."/>
            <person name="Ikema Y."/>
            <person name="Okamoto S."/>
            <person name="Okitani R."/>
            <person name="Kawakami T."/>
            <person name="Noguchi S."/>
            <person name="Itoh T."/>
            <person name="Shigeta K."/>
            <person name="Senba T."/>
            <person name="Matsumura K."/>
            <person name="Nakajima Y."/>
            <person name="Mizuno T."/>
            <person name="Morinaga M."/>
            <person name="Sasaki M."/>
            <person name="Togashi T."/>
            <person name="Oyama M."/>
            <person name="Hata H."/>
            <person name="Watanabe M."/>
            <person name="Komatsu T."/>
            <person name="Mizushima-Sugano J."/>
            <person name="Satoh T."/>
            <person name="Shirai Y."/>
            <person name="Takahashi Y."/>
            <person name="Nakagawa K."/>
            <person name="Okumura K."/>
            <person name="Nagase T."/>
            <person name="Nomura N."/>
            <person name="Kikuchi H."/>
            <person name="Masuho Y."/>
            <person name="Yamashita R."/>
            <person name="Nakai K."/>
            <person name="Yada T."/>
            <person name="Nakamura Y."/>
            <person name="Ohara O."/>
            <person name="Isogai T."/>
            <person name="Sugano S."/>
        </authorList>
    </citation>
    <scope>NUCLEOTIDE SEQUENCE [LARGE SCALE MRNA] (ISOFORMS 1 AND 2)</scope>
    <source>
        <tissue>Brain</tissue>
        <tissue>Uterus</tissue>
    </source>
</reference>
<reference key="4">
    <citation type="submission" date="2004-06" db="EMBL/GenBank/DDBJ databases">
        <title>Cloning of human full open reading frames in Gateway(TM) system entry vector (pDONR201).</title>
        <authorList>
            <person name="Ebert L."/>
            <person name="Schick M."/>
            <person name="Neubert P."/>
            <person name="Schatten R."/>
            <person name="Henze S."/>
            <person name="Korn B."/>
        </authorList>
    </citation>
    <scope>NUCLEOTIDE SEQUENCE [LARGE SCALE MRNA] (ISOFORM 1)</scope>
</reference>
<reference key="5">
    <citation type="journal article" date="2006" name="Nature">
        <title>The DNA sequence, annotation and analysis of human chromosome 3.</title>
        <authorList>
            <person name="Muzny D.M."/>
            <person name="Scherer S.E."/>
            <person name="Kaul R."/>
            <person name="Wang J."/>
            <person name="Yu J."/>
            <person name="Sudbrak R."/>
            <person name="Buhay C.J."/>
            <person name="Chen R."/>
            <person name="Cree A."/>
            <person name="Ding Y."/>
            <person name="Dugan-Rocha S."/>
            <person name="Gill R."/>
            <person name="Gunaratne P."/>
            <person name="Harris R.A."/>
            <person name="Hawes A.C."/>
            <person name="Hernandez J."/>
            <person name="Hodgson A.V."/>
            <person name="Hume J."/>
            <person name="Jackson A."/>
            <person name="Khan Z.M."/>
            <person name="Kovar-Smith C."/>
            <person name="Lewis L.R."/>
            <person name="Lozado R.J."/>
            <person name="Metzker M.L."/>
            <person name="Milosavljevic A."/>
            <person name="Miner G.R."/>
            <person name="Morgan M.B."/>
            <person name="Nazareth L.V."/>
            <person name="Scott G."/>
            <person name="Sodergren E."/>
            <person name="Song X.-Z."/>
            <person name="Steffen D."/>
            <person name="Wei S."/>
            <person name="Wheeler D.A."/>
            <person name="Wright M.W."/>
            <person name="Worley K.C."/>
            <person name="Yuan Y."/>
            <person name="Zhang Z."/>
            <person name="Adams C.Q."/>
            <person name="Ansari-Lari M.A."/>
            <person name="Ayele M."/>
            <person name="Brown M.J."/>
            <person name="Chen G."/>
            <person name="Chen Z."/>
            <person name="Clendenning J."/>
            <person name="Clerc-Blankenburg K.P."/>
            <person name="Chen R."/>
            <person name="Chen Z."/>
            <person name="Davis C."/>
            <person name="Delgado O."/>
            <person name="Dinh H.H."/>
            <person name="Dong W."/>
            <person name="Draper H."/>
            <person name="Ernst S."/>
            <person name="Fu G."/>
            <person name="Gonzalez-Garay M.L."/>
            <person name="Garcia D.K."/>
            <person name="Gillett W."/>
            <person name="Gu J."/>
            <person name="Hao B."/>
            <person name="Haugen E."/>
            <person name="Havlak P."/>
            <person name="He X."/>
            <person name="Hennig S."/>
            <person name="Hu S."/>
            <person name="Huang W."/>
            <person name="Jackson L.R."/>
            <person name="Jacob L.S."/>
            <person name="Kelly S.H."/>
            <person name="Kube M."/>
            <person name="Levy R."/>
            <person name="Li Z."/>
            <person name="Liu B."/>
            <person name="Liu J."/>
            <person name="Liu W."/>
            <person name="Lu J."/>
            <person name="Maheshwari M."/>
            <person name="Nguyen B.-V."/>
            <person name="Okwuonu G.O."/>
            <person name="Palmeiri A."/>
            <person name="Pasternak S."/>
            <person name="Perez L.M."/>
            <person name="Phelps K.A."/>
            <person name="Plopper F.J."/>
            <person name="Qiang B."/>
            <person name="Raymond C."/>
            <person name="Rodriguez R."/>
            <person name="Saenphimmachak C."/>
            <person name="Santibanez J."/>
            <person name="Shen H."/>
            <person name="Shen Y."/>
            <person name="Subramanian S."/>
            <person name="Tabor P.E."/>
            <person name="Verduzco D."/>
            <person name="Waldron L."/>
            <person name="Wang J."/>
            <person name="Wang J."/>
            <person name="Wang Q."/>
            <person name="Williams G.A."/>
            <person name="Wong G.K.-S."/>
            <person name="Yao Z."/>
            <person name="Zhang J."/>
            <person name="Zhang X."/>
            <person name="Zhao G."/>
            <person name="Zhou J."/>
            <person name="Zhou Y."/>
            <person name="Nelson D."/>
            <person name="Lehrach H."/>
            <person name="Reinhardt R."/>
            <person name="Naylor S.L."/>
            <person name="Yang H."/>
            <person name="Olson M."/>
            <person name="Weinstock G."/>
            <person name="Gibbs R.A."/>
        </authorList>
    </citation>
    <scope>NUCLEOTIDE SEQUENCE [LARGE SCALE GENOMIC DNA]</scope>
</reference>
<reference key="6">
    <citation type="submission" date="2005-07" db="EMBL/GenBank/DDBJ databases">
        <authorList>
            <person name="Mural R.J."/>
            <person name="Istrail S."/>
            <person name="Sutton G.G."/>
            <person name="Florea L."/>
            <person name="Halpern A.L."/>
            <person name="Mobarry C.M."/>
            <person name="Lippert R."/>
            <person name="Walenz B."/>
            <person name="Shatkay H."/>
            <person name="Dew I."/>
            <person name="Miller J.R."/>
            <person name="Flanigan M.J."/>
            <person name="Edwards N.J."/>
            <person name="Bolanos R."/>
            <person name="Fasulo D."/>
            <person name="Halldorsson B.V."/>
            <person name="Hannenhalli S."/>
            <person name="Turner R."/>
            <person name="Yooseph S."/>
            <person name="Lu F."/>
            <person name="Nusskern D.R."/>
            <person name="Shue B.C."/>
            <person name="Zheng X.H."/>
            <person name="Zhong F."/>
            <person name="Delcher A.L."/>
            <person name="Huson D.H."/>
            <person name="Kravitz S.A."/>
            <person name="Mouchard L."/>
            <person name="Reinert K."/>
            <person name="Remington K.A."/>
            <person name="Clark A.G."/>
            <person name="Waterman M.S."/>
            <person name="Eichler E.E."/>
            <person name="Adams M.D."/>
            <person name="Hunkapiller M.W."/>
            <person name="Myers E.W."/>
            <person name="Venter J.C."/>
        </authorList>
    </citation>
    <scope>NUCLEOTIDE SEQUENCE [LARGE SCALE GENOMIC DNA]</scope>
</reference>
<reference key="7">
    <citation type="journal article" date="2004" name="Genome Res.">
        <title>The status, quality, and expansion of the NIH full-length cDNA project: the Mammalian Gene Collection (MGC).</title>
        <authorList>
            <consortium name="The MGC Project Team"/>
        </authorList>
    </citation>
    <scope>NUCLEOTIDE SEQUENCE [LARGE SCALE MRNA] (ISOFORM 1)</scope>
    <source>
        <tissue>Brain</tissue>
        <tissue>Lung</tissue>
    </source>
</reference>
<reference key="8">
    <citation type="journal article" date="2007" name="BMC Genomics">
        <title>The full-ORF clone resource of the German cDNA consortium.</title>
        <authorList>
            <person name="Bechtel S."/>
            <person name="Rosenfelder H."/>
            <person name="Duda A."/>
            <person name="Schmidt C.P."/>
            <person name="Ernst U."/>
            <person name="Wellenreuther R."/>
            <person name="Mehrle A."/>
            <person name="Schuster C."/>
            <person name="Bahr A."/>
            <person name="Bloecker H."/>
            <person name="Heubner D."/>
            <person name="Hoerlein A."/>
            <person name="Michel G."/>
            <person name="Wedler H."/>
            <person name="Koehrer K."/>
            <person name="Ottenwaelder B."/>
            <person name="Poustka A."/>
            <person name="Wiemann S."/>
            <person name="Schupp I."/>
        </authorList>
    </citation>
    <scope>NUCLEOTIDE SEQUENCE [LARGE SCALE MRNA] OF 175-303</scope>
    <source>
        <tissue>Rectum tumor</tissue>
    </source>
</reference>
<reference key="9">
    <citation type="journal article" date="2009" name="Nat. Chem. Biol.">
        <title>Selective blockade of 2-arachidonoylglycerol hydrolysis produces cannabinoid behavioral effects.</title>
        <authorList>
            <person name="Long J.Z."/>
            <person name="Li W."/>
            <person name="Booker L."/>
            <person name="Burston J.J."/>
            <person name="Kinsey S.G."/>
            <person name="Schlosburg J.E."/>
            <person name="Pavon F.J."/>
            <person name="Serrano A.M."/>
            <person name="Selley D.E."/>
            <person name="Parsons L.H."/>
            <person name="Lichtman A.H."/>
            <person name="Cravatt B.F."/>
        </authorList>
    </citation>
    <scope>FUNCTION</scope>
    <scope>CATALYTIC ACTIVITY</scope>
</reference>
<reference key="10">
    <citation type="journal article" date="2010" name="Cell">
        <title>Monoacylglycerol lipase regulates a fatty acid network that promotes cancer pathogenesis.</title>
        <authorList>
            <person name="Nomura D.K."/>
            <person name="Long J.Z."/>
            <person name="Niessen S."/>
            <person name="Hoover H.S."/>
            <person name="Ng S.W."/>
            <person name="Cravatt B.F."/>
        </authorList>
    </citation>
    <scope>FUNCTION</scope>
    <scope>CATALYTIC ACTIVITY</scope>
</reference>
<reference key="11">
    <citation type="journal article" date="2010" name="Chem. Res. Toxicol.">
        <title>Inactivation of lipid glyceryl ester metabolism in human THP1 monocytes/macrophages by activated organophosphorus insecticides: role of carboxylesterases 1 and 2.</title>
        <authorList>
            <person name="Xie S."/>
            <person name="Borazjani A."/>
            <person name="Hatfield M.J."/>
            <person name="Edwards C.C."/>
            <person name="Potter P.M."/>
            <person name="Ross M.K."/>
        </authorList>
    </citation>
    <scope>FUNCTION</scope>
    <scope>CATALYTIC ACTIVITY</scope>
</reference>
<reference key="12">
    <citation type="journal article" date="2012" name="J. Lipid Res.">
        <title>Biochemical and pharmacological characterization of human alpha/beta-hydrolase domain containing 6 (ABHD6) and 12 (ABHD12).</title>
        <authorList>
            <person name="Navia-Paldanius D."/>
            <person name="Savinainen J.R."/>
            <person name="Laitinen J.T."/>
        </authorList>
    </citation>
    <scope>CATALYTIC ACTIVITY</scope>
    <scope>BIOPHYSICOCHEMICAL PROPERTIES</scope>
</reference>
<reference key="13">
    <citation type="journal article" date="2012" name="Proc. Natl. Acad. Sci. U.S.A.">
        <title>N-terminal acetylome analyses and functional insights of the N-terminal acetyltransferase NatB.</title>
        <authorList>
            <person name="Van Damme P."/>
            <person name="Lasa M."/>
            <person name="Polevoda B."/>
            <person name="Gazquez C."/>
            <person name="Elosegui-Artola A."/>
            <person name="Kim D.S."/>
            <person name="De Juan-Pardo E."/>
            <person name="Demeyer K."/>
            <person name="Hole K."/>
            <person name="Larrea E."/>
            <person name="Timmerman E."/>
            <person name="Prieto J."/>
            <person name="Arnesen T."/>
            <person name="Sherman F."/>
            <person name="Gevaert K."/>
            <person name="Aldabe R."/>
        </authorList>
    </citation>
    <scope>IDENTIFICATION BY MASS SPECTROMETRY [LARGE SCALE ANALYSIS]</scope>
</reference>
<reference key="14">
    <citation type="journal article" date="2014" name="J. Proteomics">
        <title>An enzyme assisted RP-RPLC approach for in-depth analysis of human liver phosphoproteome.</title>
        <authorList>
            <person name="Bian Y."/>
            <person name="Song C."/>
            <person name="Cheng K."/>
            <person name="Dong M."/>
            <person name="Wang F."/>
            <person name="Huang J."/>
            <person name="Sun D."/>
            <person name="Wang L."/>
            <person name="Ye M."/>
            <person name="Zou H."/>
        </authorList>
    </citation>
    <scope>IDENTIFICATION BY MASS SPECTROMETRY [LARGE SCALE ANALYSIS]</scope>
    <source>
        <tissue>Liver</tissue>
    </source>
</reference>
<reference key="15">
    <citation type="journal article" date="2010" name="ChemBioChem">
        <title>Crystal structure of the human monoacylglycerol lipase, a key actor in endocannabinoid signaling.</title>
        <authorList>
            <person name="Labar G."/>
            <person name="Bauvois C."/>
            <person name="Borel F."/>
            <person name="Ferrer J.L."/>
            <person name="Wouters J."/>
            <person name="Lambert D.M."/>
        </authorList>
    </citation>
    <scope>X-RAY CRYSTALLOGRAPHY (2.2 ANGSTROMS) OF 2-303</scope>
    <scope>SUBUNIT</scope>
    <scope>ACTIVE SITE</scope>
    <scope>IDENTIFICATION BY MASS SPECTROMETRY</scope>
</reference>
<reference key="16">
    <citation type="journal article" date="2014" name="Mol. Pharmacol.">
        <title>Mutation of Cys242 of human monoacylglycerol lipase disrupts balanced hydrolysis of 1- and 2-monoacylglycerols and selectively impairs inhibitor potency.</title>
        <authorList>
            <person name="Laitinen T."/>
            <person name="Navia-Paldanius D."/>
            <person name="Rytilahti R."/>
            <person name="Marjamaa J.J."/>
            <person name="Karizkova J."/>
            <person name="Parkkari T."/>
            <person name="Pantsar T."/>
            <person name="Poso A."/>
            <person name="Laitinen J.T."/>
            <person name="Savinainen J.R."/>
        </authorList>
    </citation>
    <scope>FUNCTION</scope>
    <scope>CATALYTIC ACTIVITY</scope>
    <scope>BIOPHYSICOCHEMICAL PROPERTIES</scope>
    <scope>MUTAGENESIS OF TYR-194; CYS-201; CYS-208 AND CYS-242</scope>
</reference>
<reference key="17">
    <citation type="journal article" date="2010" name="J. Mol. Biol.">
        <title>Structural basis for human monoglyceride lipase inhibition.</title>
        <authorList>
            <person name="Bertrand T."/>
            <person name="Auge F."/>
            <person name="Houtmann J."/>
            <person name="Rak A."/>
            <person name="Vallee F."/>
            <person name="Mikol V."/>
            <person name="Berne P.F."/>
            <person name="Michot N."/>
            <person name="Cheuret D."/>
            <person name="Hoornaert C."/>
            <person name="Mathieu M."/>
        </authorList>
    </citation>
    <scope>X-RAY CRYSTALLOGRAPHY (2.1 ANGSTROMS) IN COMPLEX WITH SYNTHETIC INHIBITOR SAR629</scope>
    <scope>ACTIVE SITE</scope>
</reference>
<protein>
    <recommendedName>
        <fullName evidence="11">Monoglyceride lipase</fullName>
        <shortName evidence="17">MGL</shortName>
        <ecNumber evidence="4 7 8 9 10">3.1.1.23</ecNumber>
    </recommendedName>
    <alternativeName>
        <fullName evidence="14">HU-K5</fullName>
    </alternativeName>
    <alternativeName>
        <fullName>Lysophospholipase homolog</fullName>
    </alternativeName>
    <alternativeName>
        <fullName>Lysophospholipase-like</fullName>
    </alternativeName>
    <alternativeName>
        <fullName evidence="13">Monoacylglycerol lipase</fullName>
        <shortName evidence="13">MAGL</shortName>
    </alternativeName>
</protein>
<sequence length="303" mass="33261">MPEESSPRRTPQSIPYQDLPHLVNADGQYLFCRYWKPTGTPKALIFVSHGAGEHSGRYEELARMLMGLDLLVFAHDHVGHGQSEGERMVVSDFHVFVRDVLQHVDSMQKDYPGLPVFLLGHSMGGAIAILTAAERPGHFAGMVLISPLVLANPESATTFKVLAAKVLNLVLPNLSLGPIDSSVLSRNKTEVDIYNSDPLICRAGLKVCFGIQLLNAVSRVERALPKLTVPFLLLQGSADRLCDSKGAYLLMELAKSQDKTLKIYEGAYHVLHKELPEVTNSVFHEINMWVSQRTATAGTASPP</sequence>
<name>MGLL_HUMAN</name>